<organism>
    <name type="scientific">Syntrophotalea carbinolica (strain DSM 2380 / NBRC 103641 / GraBd1)</name>
    <name type="common">Pelobacter carbinolicus</name>
    <dbReference type="NCBI Taxonomy" id="338963"/>
    <lineage>
        <taxon>Bacteria</taxon>
        <taxon>Pseudomonadati</taxon>
        <taxon>Thermodesulfobacteriota</taxon>
        <taxon>Desulfuromonadia</taxon>
        <taxon>Desulfuromonadales</taxon>
        <taxon>Syntrophotaleaceae</taxon>
        <taxon>Syntrophotalea</taxon>
    </lineage>
</organism>
<sequence length="140" mass="15815">MKKTIMTRFGEVEFDPENTVLFVDGLIGFENLRDFIVMPNRKNGPLFWIQSVEEPDLAFVLTDPTNFFLDYKVVPDARERAKLGIGTDDDCHALAVVTVPPDRKVTLNLMAPVLFAPATNRAIQVVLEKSQYKTRHPLPA</sequence>
<accession>Q3A5G2</accession>
<comment type="function">
    <text evidence="1">Acts as an anti-CsrA protein, binds CsrA and prevents it from repressing translation of its target genes, one of which is flagellin. Binds to flagellin and participates in the assembly of the flagellum.</text>
</comment>
<comment type="subunit">
    <text evidence="1">Interacts with translational regulator CsrA and flagellin(s).</text>
</comment>
<comment type="subcellular location">
    <subcellularLocation>
        <location evidence="1">Cytoplasm</location>
    </subcellularLocation>
</comment>
<comment type="similarity">
    <text evidence="1">Belongs to the FliW family.</text>
</comment>
<dbReference type="EMBL" id="CP000142">
    <property type="protein sequence ID" value="ABA88395.1"/>
    <property type="molecule type" value="Genomic_DNA"/>
</dbReference>
<dbReference type="RefSeq" id="WP_011340864.1">
    <property type="nucleotide sequence ID" value="NC_007498.2"/>
</dbReference>
<dbReference type="SMR" id="Q3A5G2"/>
<dbReference type="STRING" id="338963.Pcar_1146"/>
<dbReference type="KEGG" id="pca:Pcar_1146"/>
<dbReference type="eggNOG" id="COG1699">
    <property type="taxonomic scope" value="Bacteria"/>
</dbReference>
<dbReference type="HOGENOM" id="CLU_112356_0_2_7"/>
<dbReference type="OrthoDB" id="9801235at2"/>
<dbReference type="Proteomes" id="UP000002534">
    <property type="component" value="Chromosome"/>
</dbReference>
<dbReference type="GO" id="GO:0005737">
    <property type="term" value="C:cytoplasm"/>
    <property type="evidence" value="ECO:0007669"/>
    <property type="project" value="UniProtKB-SubCell"/>
</dbReference>
<dbReference type="GO" id="GO:0044780">
    <property type="term" value="P:bacterial-type flagellum assembly"/>
    <property type="evidence" value="ECO:0007669"/>
    <property type="project" value="UniProtKB-UniRule"/>
</dbReference>
<dbReference type="GO" id="GO:0006417">
    <property type="term" value="P:regulation of translation"/>
    <property type="evidence" value="ECO:0007669"/>
    <property type="project" value="UniProtKB-KW"/>
</dbReference>
<dbReference type="Gene3D" id="2.30.290.10">
    <property type="entry name" value="BH3618-like"/>
    <property type="match status" value="1"/>
</dbReference>
<dbReference type="HAMAP" id="MF_01185">
    <property type="entry name" value="FliW"/>
    <property type="match status" value="1"/>
</dbReference>
<dbReference type="InterPro" id="IPR003775">
    <property type="entry name" value="Flagellar_assembly_factor_FliW"/>
</dbReference>
<dbReference type="InterPro" id="IPR024046">
    <property type="entry name" value="Flagellar_assmbl_FliW_dom_sf"/>
</dbReference>
<dbReference type="NCBIfam" id="NF009799">
    <property type="entry name" value="PRK13285.2-2"/>
    <property type="match status" value="1"/>
</dbReference>
<dbReference type="PANTHER" id="PTHR39190">
    <property type="entry name" value="FLAGELLAR ASSEMBLY FACTOR FLIW"/>
    <property type="match status" value="1"/>
</dbReference>
<dbReference type="PANTHER" id="PTHR39190:SF1">
    <property type="entry name" value="FLAGELLAR ASSEMBLY FACTOR FLIW"/>
    <property type="match status" value="1"/>
</dbReference>
<dbReference type="Pfam" id="PF02623">
    <property type="entry name" value="FliW"/>
    <property type="match status" value="1"/>
</dbReference>
<dbReference type="SUPFAM" id="SSF141457">
    <property type="entry name" value="BH3618-like"/>
    <property type="match status" value="1"/>
</dbReference>
<proteinExistence type="inferred from homology"/>
<name>FLIW_SYNC1</name>
<feature type="chain" id="PRO_0000273005" description="Flagellar assembly factor FliW">
    <location>
        <begin position="1"/>
        <end position="140"/>
    </location>
</feature>
<gene>
    <name evidence="1" type="primary">fliW</name>
    <name type="ordered locus">Pcar_1146</name>
</gene>
<reference key="1">
    <citation type="submission" date="2005-10" db="EMBL/GenBank/DDBJ databases">
        <title>Complete sequence of Pelobacter carbinolicus DSM 2380.</title>
        <authorList>
            <person name="Copeland A."/>
            <person name="Lucas S."/>
            <person name="Lapidus A."/>
            <person name="Barry K."/>
            <person name="Detter J.C."/>
            <person name="Glavina T."/>
            <person name="Hammon N."/>
            <person name="Israni S."/>
            <person name="Pitluck S."/>
            <person name="Chertkov O."/>
            <person name="Schmutz J."/>
            <person name="Larimer F."/>
            <person name="Land M."/>
            <person name="Kyrpides N."/>
            <person name="Ivanova N."/>
            <person name="Richardson P."/>
        </authorList>
    </citation>
    <scope>NUCLEOTIDE SEQUENCE [LARGE SCALE GENOMIC DNA]</scope>
    <source>
        <strain>DSM 2380 / NBRC 103641 / GraBd1</strain>
    </source>
</reference>
<keyword id="KW-1005">Bacterial flagellum biogenesis</keyword>
<keyword id="KW-0143">Chaperone</keyword>
<keyword id="KW-0963">Cytoplasm</keyword>
<keyword id="KW-1185">Reference proteome</keyword>
<keyword id="KW-0810">Translation regulation</keyword>
<protein>
    <recommendedName>
        <fullName evidence="1">Flagellar assembly factor FliW</fullName>
    </recommendedName>
</protein>
<evidence type="ECO:0000255" key="1">
    <source>
        <dbReference type="HAMAP-Rule" id="MF_01185"/>
    </source>
</evidence>